<name>CEEP_EUBCE</name>
<protein>
    <recommendedName>
        <fullName evidence="1">Cellobiose 2-epimerase</fullName>
        <shortName evidence="1">CE</shortName>
        <ecNumber evidence="1">5.1.3.11</ecNumber>
    </recommendedName>
</protein>
<gene>
    <name type="primary">ce13</name>
</gene>
<sequence>MKNEVVYKQLTEKILPFWNAMRDDENGGFYGYMSEDLHIDDHADKGCILNSRILWFYSTAYMYLQDEKLLDNAKHAFEFLKTYCFDPMCGGIFWSVRYNGKPADTTKHTYNQAFAIYALSAYYEATGSIEAIAIAEIIYEKIEDTMRDTKGYLEAFTRDFRPADNDKLSENGVMAERTMNTLLHIIEAYSALVHALRKKVADPAKGDVRDELFMNVVENKLAAALELMRDKFYNSDRHRLDVFFDKEYESLIDLTSYGHDIEASWLLEWAAGILDDEEITESLHPISSDLVEKVYKEAFDGHSIVNECEDGDVNTDRIWWVEAESVLGFLKAFEREGKEEYRKAAHEILAFILDKQVDKREGSEWFEMLKEDGTPCHKPMVREWKCPYHNGRMCLEILKSGIEIG</sequence>
<keyword id="KW-0903">Direct protein sequencing</keyword>
<keyword id="KW-0413">Isomerase</keyword>
<comment type="function">
    <text evidence="1 2">Catalyzes the reversible epimerization of cellobiose to 4-O-beta-D-glucopyranosyl-D-mannose (Glc-Man). Can also epimerize lactose to epilactose.</text>
</comment>
<comment type="catalytic activity">
    <reaction evidence="1 2">
        <text>D-cellobiose = beta-D-glucosyl-(1-&gt;4)-D-mannopyranose</text>
        <dbReference type="Rhea" id="RHEA:23384"/>
        <dbReference type="ChEBI" id="CHEBI:17057"/>
        <dbReference type="ChEBI" id="CHEBI:47931"/>
        <dbReference type="EC" id="5.1.3.11"/>
    </reaction>
</comment>
<comment type="biophysicochemical properties">
    <kinetics>
        <KM evidence="2">11.3 mM for cellobiose</KM>
        <KM evidence="2">72 mM for lactose</KM>
        <Vmax evidence="2">36.4 umol/min/mg enzyme with cellobiose as substrate</Vmax>
        <Vmax evidence="2">41.5 umol/min/mg enzyme with lactose as substrate</Vmax>
        <text>kcat is 28.5 sec(-1) for cellobiose. kcat is 32.5 sec(-1) for lactose.</text>
    </kinetics>
    <phDependence>
        <text evidence="2">Optimum pH is 7.0-8.5.</text>
    </phDependence>
    <temperatureDependence>
        <text evidence="2">Optimum temperature is 35 degrees Celsius.</text>
    </temperatureDependence>
</comment>
<comment type="similarity">
    <text evidence="1">Belongs to the cellobiose 2-epimerase family.</text>
</comment>
<dbReference type="EC" id="5.1.3.11" evidence="1"/>
<dbReference type="EMBL" id="AB372003">
    <property type="protein sequence ID" value="BAG68451.1"/>
    <property type="molecule type" value="Genomic_DNA"/>
</dbReference>
<dbReference type="SMR" id="B3XZI5"/>
<dbReference type="BRENDA" id="5.1.3.11">
    <property type="organism ID" value="8385"/>
</dbReference>
<dbReference type="GO" id="GO:0047736">
    <property type="term" value="F:cellobiose epimerase activity"/>
    <property type="evidence" value="ECO:0007669"/>
    <property type="project" value="UniProtKB-UniRule"/>
</dbReference>
<dbReference type="GO" id="GO:0005975">
    <property type="term" value="P:carbohydrate metabolic process"/>
    <property type="evidence" value="ECO:0007669"/>
    <property type="project" value="InterPro"/>
</dbReference>
<dbReference type="Gene3D" id="1.50.10.10">
    <property type="match status" value="1"/>
</dbReference>
<dbReference type="HAMAP" id="MF_00929">
    <property type="entry name" value="Cellobiose_2_epim"/>
    <property type="match status" value="1"/>
</dbReference>
<dbReference type="InterPro" id="IPR008928">
    <property type="entry name" value="6-hairpin_glycosidase_sf"/>
</dbReference>
<dbReference type="InterPro" id="IPR012341">
    <property type="entry name" value="6hp_glycosidase-like_sf"/>
</dbReference>
<dbReference type="InterPro" id="IPR010819">
    <property type="entry name" value="AGE/CE"/>
</dbReference>
<dbReference type="InterPro" id="IPR028584">
    <property type="entry name" value="Cellobiose_2_epim"/>
</dbReference>
<dbReference type="PANTHER" id="PTHR15108">
    <property type="entry name" value="N-ACYLGLUCOSAMINE-2-EPIMERASE"/>
    <property type="match status" value="1"/>
</dbReference>
<dbReference type="Pfam" id="PF07221">
    <property type="entry name" value="GlcNAc_2-epim"/>
    <property type="match status" value="1"/>
</dbReference>
<dbReference type="SUPFAM" id="SSF48208">
    <property type="entry name" value="Six-hairpin glycosidases"/>
    <property type="match status" value="1"/>
</dbReference>
<organism>
    <name type="scientific">Eubacterium cellulosolvens</name>
    <dbReference type="NCBI Taxonomy" id="29322"/>
    <lineage>
        <taxon>Bacteria</taxon>
        <taxon>Bacillati</taxon>
        <taxon>Bacillota</taxon>
        <taxon>Clostridia</taxon>
        <taxon>Eubacteriales</taxon>
        <taxon>Eubacteriaceae</taxon>
        <taxon>Eubacterium</taxon>
    </lineage>
</organism>
<accession>B3XZI5</accession>
<evidence type="ECO:0000255" key="1">
    <source>
        <dbReference type="HAMAP-Rule" id="MF_00929"/>
    </source>
</evidence>
<evidence type="ECO:0000269" key="2">
    <source>
    </source>
</evidence>
<proteinExistence type="evidence at protein level"/>
<feature type="chain" id="PRO_0000421446" description="Cellobiose 2-epimerase">
    <location>
        <begin position="1"/>
        <end position="405"/>
    </location>
</feature>
<reference key="1">
    <citation type="journal article" date="2008" name="FEMS Microbiol. Lett.">
        <title>Cloning and sequencing of the gene for cellobiose 2-epimerase from a ruminal strain of Eubacterium cellulosolvens.</title>
        <authorList>
            <person name="Taguchi H."/>
            <person name="Senoura T."/>
            <person name="Hamada S."/>
            <person name="Matsui H."/>
            <person name="Kobayashi Y."/>
            <person name="Watanabe J."/>
            <person name="Wasaki J."/>
            <person name="Ito S."/>
        </authorList>
    </citation>
    <scope>NUCLEOTIDE SEQUENCE [GENOMIC DNA]</scope>
    <scope>PROTEIN SEQUENCE OF 1-10</scope>
    <scope>FUNCTION</scope>
    <scope>CATALYTIC ACTIVITY</scope>
    <scope>BIOPHYSICOCHEMICAL PROPERTIES</scope>
    <source>
        <strain>NE13</strain>
    </source>
</reference>